<gene>
    <name type="primary">CCP1</name>
    <name type="ORF">CNAG_01138</name>
</gene>
<comment type="function">
    <text evidence="6">Destroys radicals which are normally produced within the cells and which are toxic to biological systems.</text>
</comment>
<comment type="catalytic activity">
    <reaction evidence="2">
        <text>2 Fe(II)-[cytochrome c] + H2O2 + 2 H(+) = 2 Fe(III)-[cytochrome c] + 2 H2O</text>
        <dbReference type="Rhea" id="RHEA:16581"/>
        <dbReference type="Rhea" id="RHEA-COMP:10350"/>
        <dbReference type="Rhea" id="RHEA-COMP:14399"/>
        <dbReference type="ChEBI" id="CHEBI:15377"/>
        <dbReference type="ChEBI" id="CHEBI:15378"/>
        <dbReference type="ChEBI" id="CHEBI:16240"/>
        <dbReference type="ChEBI" id="CHEBI:29033"/>
        <dbReference type="ChEBI" id="CHEBI:29034"/>
        <dbReference type="EC" id="1.11.1.5"/>
    </reaction>
</comment>
<comment type="cofactor">
    <cofactor evidence="4">
        <name>heme b</name>
        <dbReference type="ChEBI" id="CHEBI:60344"/>
    </cofactor>
    <text evidence="4">Binds 1 heme b (iron(II)-protoporphyrin IX) group per subunit.</text>
</comment>
<comment type="subunit">
    <text evidence="2 7">Forms a one-to-one complex with cytochrome c (By similarity). Interacts with MID1 (via C-terminus); the interaction may contribute to cellular detoxification of radicals (PubMed:26385891).</text>
</comment>
<comment type="subcellular location">
    <subcellularLocation>
        <location evidence="2">Mitochondrion matrix</location>
    </subcellularLocation>
    <subcellularLocation>
        <location evidence="2">Mitochondrion intermembrane space</location>
    </subcellularLocation>
</comment>
<comment type="similarity">
    <text evidence="8">Belongs to the peroxidase family. Cytochrome c peroxidase subfamily.</text>
</comment>
<feature type="transit peptide" description="Mitochondrion" evidence="3">
    <location>
        <begin position="1"/>
        <end position="32"/>
    </location>
</feature>
<feature type="chain" id="PRO_0000045290" description="Cytochrome c peroxidase, mitochondrial">
    <location>
        <begin position="33"/>
        <end position="377"/>
    </location>
</feature>
<feature type="active site" description="Proton acceptor" evidence="4 5">
    <location>
        <position position="138"/>
    </location>
</feature>
<feature type="active site" description="Tryptophan radical intermediate" evidence="1">
    <location>
        <position position="277"/>
    </location>
</feature>
<feature type="binding site" description="axial binding residue">
    <location>
        <position position="261"/>
    </location>
    <ligand>
        <name>heme b</name>
        <dbReference type="ChEBI" id="CHEBI:60344"/>
    </ligand>
    <ligandPart>
        <name>Fe</name>
        <dbReference type="ChEBI" id="CHEBI:18248"/>
    </ligandPart>
</feature>
<feature type="site" description="Transition state stabilizer" evidence="4">
    <location>
        <position position="134"/>
    </location>
</feature>
<accession>Q6URB0</accession>
<accession>J9VKL6</accession>
<proteinExistence type="evidence at protein level"/>
<evidence type="ECO:0000250" key="1"/>
<evidence type="ECO:0000250" key="2">
    <source>
        <dbReference type="UniProtKB" id="P00431"/>
    </source>
</evidence>
<evidence type="ECO:0000255" key="3"/>
<evidence type="ECO:0000255" key="4">
    <source>
        <dbReference type="PROSITE-ProRule" id="PRU00297"/>
    </source>
</evidence>
<evidence type="ECO:0000255" key="5">
    <source>
        <dbReference type="PROSITE-ProRule" id="PRU10012"/>
    </source>
</evidence>
<evidence type="ECO:0000269" key="6">
    <source>
    </source>
</evidence>
<evidence type="ECO:0000269" key="7">
    <source>
    </source>
</evidence>
<evidence type="ECO:0000305" key="8"/>
<keyword id="KW-0349">Heme</keyword>
<keyword id="KW-0408">Iron</keyword>
<keyword id="KW-0479">Metal-binding</keyword>
<keyword id="KW-0496">Mitochondrion</keyword>
<keyword id="KW-0560">Oxidoreductase</keyword>
<keyword id="KW-0575">Peroxidase</keyword>
<keyword id="KW-0809">Transit peptide</keyword>
<sequence length="377" mass="42088">MSFRAPNLIRSTVGRRAGQTLNLRSQVIRRRFATEGGPEITKPSAPRSSNTGYIFAGLGVAAVGAAYYFYGTGRTEHDSTNKADTVVREAVATVEAKTGLRRGKDEYQKVYNRIAETLDKEGYDDGSLAPVLLRLAWHASGTYSKADGTGGSNFATMRFKPEAEHSANNGLHVAREHMEKIKQEFPWISYGDLWTLGGVCAIQESGGPTIPWRPGRIDGYAAQVTPDGRLPDATQAQDHLRFIFNRMGFNDQEIVALSGAHAMGRCHPNRSGFDGPWTFSPVTFSNQYFALLRDEPWQWKKWTGPAQFEDKKTKTLMMLPTDMALVKDKSFKKYVDIYADNEEKFFSDFAKAFSKLIELGVPERQWAGEPWTMATSD</sequence>
<organism>
    <name type="scientific">Cryptococcus neoformans var. grubii serotype A (strain H99 / ATCC 208821 / CBS 10515 / FGSC 9487)</name>
    <name type="common">Filobasidiella neoformans var. grubii</name>
    <dbReference type="NCBI Taxonomy" id="235443"/>
    <lineage>
        <taxon>Eukaryota</taxon>
        <taxon>Fungi</taxon>
        <taxon>Dikarya</taxon>
        <taxon>Basidiomycota</taxon>
        <taxon>Agaricomycotina</taxon>
        <taxon>Tremellomycetes</taxon>
        <taxon>Tremellales</taxon>
        <taxon>Cryptococcaceae</taxon>
        <taxon>Cryptococcus</taxon>
        <taxon>Cryptococcus neoformans species complex</taxon>
    </lineage>
</organism>
<dbReference type="EC" id="1.11.1.5" evidence="2"/>
<dbReference type="EMBL" id="AY363612">
    <property type="protein sequence ID" value="AAR20479.1"/>
    <property type="molecule type" value="Genomic_DNA"/>
</dbReference>
<dbReference type="EMBL" id="CP003824">
    <property type="protein sequence ID" value="AFR95007.1"/>
    <property type="molecule type" value="Genomic_DNA"/>
</dbReference>
<dbReference type="RefSeq" id="XP_012049342.1">
    <property type="nucleotide sequence ID" value="XM_012193952.1"/>
</dbReference>
<dbReference type="SMR" id="Q6URB0"/>
<dbReference type="PeroxiBase" id="3838">
    <property type="entry name" value="CnCcP01_grubiiH99"/>
</dbReference>
<dbReference type="SwissPalm" id="Q6URB0"/>
<dbReference type="GeneID" id="23884881"/>
<dbReference type="KEGG" id="cng:CNAG_01138"/>
<dbReference type="VEuPathDB" id="FungiDB:CNAG_01138"/>
<dbReference type="HOGENOM" id="CLU_036959_1_1_1"/>
<dbReference type="OrthoDB" id="2563at5206"/>
<dbReference type="BRENDA" id="1.11.1.5">
    <property type="organism ID" value="1723"/>
</dbReference>
<dbReference type="Proteomes" id="UP000010091">
    <property type="component" value="Chromosome 5"/>
</dbReference>
<dbReference type="GO" id="GO:0005758">
    <property type="term" value="C:mitochondrial intermembrane space"/>
    <property type="evidence" value="ECO:0007669"/>
    <property type="project" value="UniProtKB-SubCell"/>
</dbReference>
<dbReference type="GO" id="GO:0005759">
    <property type="term" value="C:mitochondrial matrix"/>
    <property type="evidence" value="ECO:0007669"/>
    <property type="project" value="UniProtKB-SubCell"/>
</dbReference>
<dbReference type="GO" id="GO:0004130">
    <property type="term" value="F:cytochrome-c peroxidase activity"/>
    <property type="evidence" value="ECO:0007669"/>
    <property type="project" value="UniProtKB-EC"/>
</dbReference>
<dbReference type="GO" id="GO:0020037">
    <property type="term" value="F:heme binding"/>
    <property type="evidence" value="ECO:0007669"/>
    <property type="project" value="InterPro"/>
</dbReference>
<dbReference type="GO" id="GO:0046872">
    <property type="term" value="F:metal ion binding"/>
    <property type="evidence" value="ECO:0007669"/>
    <property type="project" value="UniProtKB-KW"/>
</dbReference>
<dbReference type="GO" id="GO:0034599">
    <property type="term" value="P:cellular response to oxidative stress"/>
    <property type="evidence" value="ECO:0007669"/>
    <property type="project" value="EnsemblFungi"/>
</dbReference>
<dbReference type="GO" id="GO:0042744">
    <property type="term" value="P:hydrogen peroxide catabolic process"/>
    <property type="evidence" value="ECO:0007669"/>
    <property type="project" value="TreeGrafter"/>
</dbReference>
<dbReference type="GO" id="GO:0000302">
    <property type="term" value="P:response to reactive oxygen species"/>
    <property type="evidence" value="ECO:0007669"/>
    <property type="project" value="TreeGrafter"/>
</dbReference>
<dbReference type="CDD" id="cd00691">
    <property type="entry name" value="ascorbate_peroxidase"/>
    <property type="match status" value="1"/>
</dbReference>
<dbReference type="FunFam" id="1.10.420.10:FF:000009">
    <property type="entry name" value="Ascorbate peroxidase"/>
    <property type="match status" value="1"/>
</dbReference>
<dbReference type="FunFam" id="1.10.520.10:FF:000005">
    <property type="entry name" value="Cytochrome c peroxidase"/>
    <property type="match status" value="1"/>
</dbReference>
<dbReference type="Gene3D" id="1.10.520.10">
    <property type="match status" value="1"/>
</dbReference>
<dbReference type="Gene3D" id="1.10.420.10">
    <property type="entry name" value="Peroxidase, domain 2"/>
    <property type="match status" value="1"/>
</dbReference>
<dbReference type="InterPro" id="IPR044831">
    <property type="entry name" value="Ccp1-like"/>
</dbReference>
<dbReference type="InterPro" id="IPR002016">
    <property type="entry name" value="Haem_peroxidase"/>
</dbReference>
<dbReference type="InterPro" id="IPR010255">
    <property type="entry name" value="Haem_peroxidase_sf"/>
</dbReference>
<dbReference type="InterPro" id="IPR002207">
    <property type="entry name" value="Peroxidase_I"/>
</dbReference>
<dbReference type="InterPro" id="IPR019794">
    <property type="entry name" value="Peroxidases_AS"/>
</dbReference>
<dbReference type="InterPro" id="IPR019793">
    <property type="entry name" value="Peroxidases_heam-ligand_BS"/>
</dbReference>
<dbReference type="PANTHER" id="PTHR31356:SF58">
    <property type="entry name" value="CYTOCHROME C PEROXIDASE, MITOCHONDRIAL"/>
    <property type="match status" value="1"/>
</dbReference>
<dbReference type="PANTHER" id="PTHR31356">
    <property type="entry name" value="THYLAKOID LUMENAL 29 KDA PROTEIN, CHLOROPLASTIC-RELATED"/>
    <property type="match status" value="1"/>
</dbReference>
<dbReference type="Pfam" id="PF00141">
    <property type="entry name" value="peroxidase"/>
    <property type="match status" value="1"/>
</dbReference>
<dbReference type="PRINTS" id="PR00459">
    <property type="entry name" value="ASPEROXIDASE"/>
</dbReference>
<dbReference type="PRINTS" id="PR00458">
    <property type="entry name" value="PEROXIDASE"/>
</dbReference>
<dbReference type="SUPFAM" id="SSF48113">
    <property type="entry name" value="Heme-dependent peroxidases"/>
    <property type="match status" value="1"/>
</dbReference>
<dbReference type="PROSITE" id="PS00435">
    <property type="entry name" value="PEROXIDASE_1"/>
    <property type="match status" value="1"/>
</dbReference>
<dbReference type="PROSITE" id="PS00436">
    <property type="entry name" value="PEROXIDASE_2"/>
    <property type="match status" value="1"/>
</dbReference>
<dbReference type="PROSITE" id="PS50873">
    <property type="entry name" value="PEROXIDASE_4"/>
    <property type="match status" value="1"/>
</dbReference>
<reference key="1">
    <citation type="journal article" date="2005" name="Fungal Genet. Biol.">
        <title>Cytochrome c peroxidase contributes to the antioxidant defense of Cryptococcus neoformans.</title>
        <authorList>
            <person name="Giles S.S."/>
            <person name="Perfect J.R."/>
            <person name="Cox G.M."/>
        </authorList>
    </citation>
    <scope>NUCLEOTIDE SEQUENCE [GENOMIC DNA]</scope>
    <scope>FUNCTION</scope>
    <source>
        <strain>H99 / ATCC 208821 / CBS 10515 / FGSC 9487</strain>
    </source>
</reference>
<reference key="2">
    <citation type="journal article" date="2014" name="PLoS Genet.">
        <title>Analysis of the genome and transcriptome of Cryptococcus neoformans var. grubii reveals complex RNA expression and microevolution leading to virulence attenuation.</title>
        <authorList>
            <person name="Janbon G."/>
            <person name="Ormerod K.L."/>
            <person name="Paulet D."/>
            <person name="Byrnes E.J. III"/>
            <person name="Yadav V."/>
            <person name="Chatterjee G."/>
            <person name="Mullapudi N."/>
            <person name="Hon C.-C."/>
            <person name="Billmyre R.B."/>
            <person name="Brunel F."/>
            <person name="Bahn Y.-S."/>
            <person name="Chen W."/>
            <person name="Chen Y."/>
            <person name="Chow E.W.L."/>
            <person name="Coppee J.-Y."/>
            <person name="Floyd-Averette A."/>
            <person name="Gaillardin C."/>
            <person name="Gerik K.J."/>
            <person name="Goldberg J."/>
            <person name="Gonzalez-Hilarion S."/>
            <person name="Gujja S."/>
            <person name="Hamlin J.L."/>
            <person name="Hsueh Y.-P."/>
            <person name="Ianiri G."/>
            <person name="Jones S."/>
            <person name="Kodira C.D."/>
            <person name="Kozubowski L."/>
            <person name="Lam W."/>
            <person name="Marra M."/>
            <person name="Mesner L.D."/>
            <person name="Mieczkowski P.A."/>
            <person name="Moyrand F."/>
            <person name="Nielsen K."/>
            <person name="Proux C."/>
            <person name="Rossignol T."/>
            <person name="Schein J.E."/>
            <person name="Sun S."/>
            <person name="Wollschlaeger C."/>
            <person name="Wood I.A."/>
            <person name="Zeng Q."/>
            <person name="Neuveglise C."/>
            <person name="Newlon C.S."/>
            <person name="Perfect J.R."/>
            <person name="Lodge J.K."/>
            <person name="Idnurm A."/>
            <person name="Stajich J.E."/>
            <person name="Kronstad J.W."/>
            <person name="Sanyal K."/>
            <person name="Heitman J."/>
            <person name="Fraser J.A."/>
            <person name="Cuomo C.A."/>
            <person name="Dietrich F.S."/>
        </authorList>
    </citation>
    <scope>NUCLEOTIDE SEQUENCE [LARGE SCALE GENOMIC DNA]</scope>
    <source>
        <strain>H99 / ATCC 208821 / CBS 10515 / FGSC 9487</strain>
    </source>
</reference>
<reference key="3">
    <citation type="journal article" date="2015" name="Eukaryot. Cell">
        <title>The Cch1-Mid1 High-Affinity Calcium Channel Contributes to the Virulence of Cryptococcus neoformans by Mitigating Oxidative Stress.</title>
        <authorList>
            <person name="Vu K."/>
            <person name="Bautos J.M."/>
            <person name="Gelli A."/>
        </authorList>
    </citation>
    <scope>INTERACTION WITH MID1</scope>
</reference>
<name>CCPR_CRYNH</name>
<protein>
    <recommendedName>
        <fullName>Cytochrome c peroxidase, mitochondrial</fullName>
        <shortName>CCP</shortName>
        <ecNumber evidence="2">1.11.1.5</ecNumber>
    </recommendedName>
</protein>